<gene>
    <name type="ordered locus">SAUSA300_1697</name>
</gene>
<accession>Q2FFY7</accession>
<dbReference type="EC" id="3.4.13.-"/>
<dbReference type="EMBL" id="CP000255">
    <property type="protein sequence ID" value="ABD21835.1"/>
    <property type="molecule type" value="Genomic_DNA"/>
</dbReference>
<dbReference type="SMR" id="Q2FFY7"/>
<dbReference type="KEGG" id="saa:SAUSA300_1697"/>
<dbReference type="HOGENOM" id="CLU_031786_2_0_9"/>
<dbReference type="OMA" id="EPMYRNP"/>
<dbReference type="Proteomes" id="UP000001939">
    <property type="component" value="Chromosome"/>
</dbReference>
<dbReference type="GO" id="GO:0008777">
    <property type="term" value="F:acetylornithine deacetylase activity"/>
    <property type="evidence" value="ECO:0007669"/>
    <property type="project" value="TreeGrafter"/>
</dbReference>
<dbReference type="GO" id="GO:0016805">
    <property type="term" value="F:dipeptidase activity"/>
    <property type="evidence" value="ECO:0007669"/>
    <property type="project" value="UniProtKB-KW"/>
</dbReference>
<dbReference type="GO" id="GO:0008237">
    <property type="term" value="F:metallopeptidase activity"/>
    <property type="evidence" value="ECO:0007669"/>
    <property type="project" value="UniProtKB-KW"/>
</dbReference>
<dbReference type="GO" id="GO:0008270">
    <property type="term" value="F:zinc ion binding"/>
    <property type="evidence" value="ECO:0007669"/>
    <property type="project" value="InterPro"/>
</dbReference>
<dbReference type="GO" id="GO:0006526">
    <property type="term" value="P:L-arginine biosynthetic process"/>
    <property type="evidence" value="ECO:0007669"/>
    <property type="project" value="TreeGrafter"/>
</dbReference>
<dbReference type="GO" id="GO:0006508">
    <property type="term" value="P:proteolysis"/>
    <property type="evidence" value="ECO:0007669"/>
    <property type="project" value="UniProtKB-KW"/>
</dbReference>
<dbReference type="CDD" id="cd03888">
    <property type="entry name" value="M20_PepV"/>
    <property type="match status" value="1"/>
</dbReference>
<dbReference type="Gene3D" id="3.30.70.360">
    <property type="match status" value="2"/>
</dbReference>
<dbReference type="Gene3D" id="3.40.630.10">
    <property type="entry name" value="Zn peptidases"/>
    <property type="match status" value="1"/>
</dbReference>
<dbReference type="InterPro" id="IPR036264">
    <property type="entry name" value="Bact_exopeptidase_dim_dom"/>
</dbReference>
<dbReference type="InterPro" id="IPR010964">
    <property type="entry name" value="M20A_pepV-rel"/>
</dbReference>
<dbReference type="InterPro" id="IPR002933">
    <property type="entry name" value="Peptidase_M20"/>
</dbReference>
<dbReference type="InterPro" id="IPR050072">
    <property type="entry name" value="Peptidase_M20A"/>
</dbReference>
<dbReference type="NCBIfam" id="TIGR01887">
    <property type="entry name" value="dipeptidaselike"/>
    <property type="match status" value="1"/>
</dbReference>
<dbReference type="NCBIfam" id="NF005591">
    <property type="entry name" value="PRK07318.1"/>
    <property type="match status" value="1"/>
</dbReference>
<dbReference type="PANTHER" id="PTHR43808">
    <property type="entry name" value="ACETYLORNITHINE DEACETYLASE"/>
    <property type="match status" value="1"/>
</dbReference>
<dbReference type="PANTHER" id="PTHR43808:SF31">
    <property type="entry name" value="N-ACETYL-L-CITRULLINE DEACETYLASE"/>
    <property type="match status" value="1"/>
</dbReference>
<dbReference type="Pfam" id="PF01546">
    <property type="entry name" value="Peptidase_M20"/>
    <property type="match status" value="1"/>
</dbReference>
<dbReference type="SUPFAM" id="SSF55031">
    <property type="entry name" value="Bacterial exopeptidase dimerisation domain"/>
    <property type="match status" value="1"/>
</dbReference>
<dbReference type="SUPFAM" id="SSF53187">
    <property type="entry name" value="Zn-dependent exopeptidases"/>
    <property type="match status" value="1"/>
</dbReference>
<reference key="1">
    <citation type="journal article" date="2006" name="Lancet">
        <title>Complete genome sequence of USA300, an epidemic clone of community-acquired meticillin-resistant Staphylococcus aureus.</title>
        <authorList>
            <person name="Diep B.A."/>
            <person name="Gill S.R."/>
            <person name="Chang R.F."/>
            <person name="Phan T.H."/>
            <person name="Chen J.H."/>
            <person name="Davidson M.G."/>
            <person name="Lin F."/>
            <person name="Lin J."/>
            <person name="Carleton H.A."/>
            <person name="Mongodin E.F."/>
            <person name="Sensabaugh G.F."/>
            <person name="Perdreau-Remington F."/>
        </authorList>
    </citation>
    <scope>NUCLEOTIDE SEQUENCE [LARGE SCALE GENOMIC DNA]</scope>
    <source>
        <strain>USA300</strain>
    </source>
</reference>
<feature type="chain" id="PRO_0000282626" description="Putative dipeptidase SAUSA300_1697">
    <location>
        <begin position="1"/>
        <end position="469"/>
    </location>
</feature>
<feature type="active site" evidence="1">
    <location>
        <position position="86"/>
    </location>
</feature>
<feature type="active site" description="Proton acceptor" evidence="1">
    <location>
        <position position="149"/>
    </location>
</feature>
<feature type="binding site" evidence="1">
    <location>
        <position position="84"/>
    </location>
    <ligand>
        <name>Zn(2+)</name>
        <dbReference type="ChEBI" id="CHEBI:29105"/>
        <label>2</label>
    </ligand>
</feature>
<feature type="binding site" evidence="1">
    <location>
        <position position="115"/>
    </location>
    <ligand>
        <name>Zn(2+)</name>
        <dbReference type="ChEBI" id="CHEBI:29105"/>
        <label>1</label>
    </ligand>
</feature>
<feature type="binding site" evidence="1">
    <location>
        <position position="115"/>
    </location>
    <ligand>
        <name>Zn(2+)</name>
        <dbReference type="ChEBI" id="CHEBI:29105"/>
        <label>2</label>
    </ligand>
</feature>
<feature type="binding site" evidence="1">
    <location>
        <position position="150"/>
    </location>
    <ligand>
        <name>Zn(2+)</name>
        <dbReference type="ChEBI" id="CHEBI:29105"/>
        <label>1</label>
    </ligand>
</feature>
<feature type="binding site" evidence="1">
    <location>
        <position position="173"/>
    </location>
    <ligand>
        <name>Zn(2+)</name>
        <dbReference type="ChEBI" id="CHEBI:29105"/>
        <label>2</label>
    </ligand>
</feature>
<feature type="binding site" evidence="1">
    <location>
        <position position="440"/>
    </location>
    <ligand>
        <name>Zn(2+)</name>
        <dbReference type="ChEBI" id="CHEBI:29105"/>
        <label>1</label>
    </ligand>
</feature>
<organism>
    <name type="scientific">Staphylococcus aureus (strain USA300)</name>
    <dbReference type="NCBI Taxonomy" id="367830"/>
    <lineage>
        <taxon>Bacteria</taxon>
        <taxon>Bacillati</taxon>
        <taxon>Bacillota</taxon>
        <taxon>Bacilli</taxon>
        <taxon>Bacillales</taxon>
        <taxon>Staphylococcaceae</taxon>
        <taxon>Staphylococcus</taxon>
    </lineage>
</organism>
<proteinExistence type="inferred from homology"/>
<sequence>MWKEKVQQYEDQIINDLKGLLAIESVRDDAKASEDAPVGPGPRKALDYMYEIAHRDGFTTHDVDHIAGRIEAGKGNDVLGILCHVDVVPAGDGWDSNPFEPVVTEDAIIARGTLDDKGPTIAAYYAIKILEDMNVDWKKRIHMIIGTDEESDWKCTDRYFKTEEMPTLGFAPDAEFPCIHGEKGITTFDLVQNKLTEDQDEPDYELITFKSGERYNMVPDHAEARVLVKENMTDVIQDFEYFLEQNHLQGDSTVDSGILVLTVEGKAVHGMDPSIGVNAGLYLLKFLASLNLDNNAQAFVAFSNRYLFNSDFGEKMGMKFHTDVMGDVTTNIGVITYDNENAGLFGINLRYPEGFEFEKAMDRFANEIQQYGFEVKLGKVQPPHYVDKNDPFVQKLVTAYRNQTNDMTEPYTIGGGTYARNLDKGVAFGAMFSDSEDLMHQKNEYITKKQLFNATSIYLEAIYSLCVEE</sequence>
<evidence type="ECO:0000250" key="1"/>
<evidence type="ECO:0000305" key="2"/>
<keyword id="KW-0224">Dipeptidase</keyword>
<keyword id="KW-0378">Hydrolase</keyword>
<keyword id="KW-0479">Metal-binding</keyword>
<keyword id="KW-0482">Metalloprotease</keyword>
<keyword id="KW-0645">Protease</keyword>
<keyword id="KW-0862">Zinc</keyword>
<comment type="cofactor">
    <cofactor evidence="1">
        <name>Zn(2+)</name>
        <dbReference type="ChEBI" id="CHEBI:29105"/>
    </cofactor>
    <text evidence="1">Binds 2 Zn(2+) ions per subunit.</text>
</comment>
<comment type="similarity">
    <text evidence="2">Belongs to the peptidase M20A family.</text>
</comment>
<protein>
    <recommendedName>
        <fullName>Putative dipeptidase SAUSA300_1697</fullName>
        <ecNumber>3.4.13.-</ecNumber>
    </recommendedName>
</protein>
<name>PEPVL_STAA3</name>